<keyword id="KW-0002">3D-structure</keyword>
<keyword id="KW-0007">Acetylation</keyword>
<keyword id="KW-0175">Coiled coil</keyword>
<keyword id="KW-1017">Isopeptide bond</keyword>
<keyword id="KW-0488">Methylation</keyword>
<keyword id="KW-0507">mRNA processing</keyword>
<keyword id="KW-0539">Nucleus</keyword>
<keyword id="KW-0597">Phosphoprotein</keyword>
<keyword id="KW-1267">Proteomics identification</keyword>
<keyword id="KW-1185">Reference proteome</keyword>
<keyword id="KW-0832">Ubl conjugation</keyword>
<comment type="function">
    <text evidence="4 5">Component of pre-mRNA cleavage complex II, which promotes transcription termination by RNA polymerase II.</text>
</comment>
<comment type="subunit">
    <text evidence="5">Associates with the phosphorylated CTD domain of POLR2A /RNA polymerase II.</text>
</comment>
<comment type="interaction">
    <interactant intactId="EBI-2559809">
        <id>O94913</id>
    </interactant>
    <interactant intactId="EBI-2559831">
        <id>Q92989</id>
        <label>CLP1</label>
    </interactant>
    <organismsDiffer>false</organismsDiffer>
    <experiments>3</experiments>
</comment>
<comment type="subcellular location">
    <subcellularLocation>
        <location evidence="5">Nucleus</location>
    </subcellularLocation>
</comment>
<comment type="PTM">
    <text evidence="5">Phosphorylation at Ser-120 and/or Thr-121 by WNK1 weakens its association with POLR2A/RNA polymerase II, promoting transcript release from the chromatin template and mRNA export to the cytoplasm.</text>
</comment>
<comment type="sequence caution" evidence="8">
    <conflict type="frameshift">
        <sequence resource="EMBL-CDS" id="AAC03107"/>
    </conflict>
</comment>
<comment type="sequence caution" evidence="8">
    <conflict type="miscellaneous discrepancy">
        <sequence resource="EMBL-CDS" id="AAC03107"/>
    </conflict>
    <text>Contaminating sequence. Potential poly-A sequence.</text>
</comment>
<comment type="sequence caution" evidence="8">
    <conflict type="erroneous initiation">
        <sequence resource="EMBL-CDS" id="BAA74847"/>
    </conflict>
</comment>
<name>PCF11_HUMAN</name>
<evidence type="ECO:0000255" key="1"/>
<evidence type="ECO:0000255" key="2">
    <source>
        <dbReference type="PROSITE-ProRule" id="PRU00724"/>
    </source>
</evidence>
<evidence type="ECO:0000256" key="3">
    <source>
        <dbReference type="SAM" id="MobiDB-lite"/>
    </source>
</evidence>
<evidence type="ECO:0000269" key="4">
    <source>
    </source>
</evidence>
<evidence type="ECO:0000269" key="5">
    <source>
    </source>
</evidence>
<evidence type="ECO:0000303" key="6">
    <source>
    </source>
</evidence>
<evidence type="ECO:0000303" key="7">
    <source>
    </source>
</evidence>
<evidence type="ECO:0000305" key="8"/>
<evidence type="ECO:0000305" key="9">
    <source>
    </source>
</evidence>
<evidence type="ECO:0000312" key="10">
    <source>
        <dbReference type="HGNC" id="HGNC:30097"/>
    </source>
</evidence>
<evidence type="ECO:0007744" key="11">
    <source>
    </source>
</evidence>
<evidence type="ECO:0007744" key="12">
    <source>
    </source>
</evidence>
<evidence type="ECO:0007744" key="13">
    <source>
    </source>
</evidence>
<evidence type="ECO:0007744" key="14">
    <source>
    </source>
</evidence>
<evidence type="ECO:0007744" key="15">
    <source>
    </source>
</evidence>
<evidence type="ECO:0007744" key="16">
    <source>
    </source>
</evidence>
<evidence type="ECO:0007744" key="17">
    <source>
    </source>
</evidence>
<evidence type="ECO:0007744" key="18">
    <source>
    </source>
</evidence>
<evidence type="ECO:0007744" key="19">
    <source>
    </source>
</evidence>
<evidence type="ECO:0007744" key="20">
    <source>
    </source>
</evidence>
<evidence type="ECO:0007744" key="21">
    <source>
    </source>
</evidence>
<evidence type="ECO:0007744" key="22">
    <source>
    </source>
</evidence>
<evidence type="ECO:0007829" key="23">
    <source>
        <dbReference type="PDB" id="6WJH"/>
    </source>
</evidence>
<protein>
    <recommendedName>
        <fullName evidence="8">Pre-mRNA cleavage complex 2 protein Pcf11</fullName>
    </recommendedName>
    <alternativeName>
        <fullName>Pre-mRNA cleavage complex II protein Pcf11</fullName>
    </alternativeName>
</protein>
<reference key="1">
    <citation type="journal article" date="1998" name="DNA Res.">
        <title>Prediction of the coding sequences of unidentified human genes. XII. The complete sequences of 100 new cDNA clones from brain which code for large proteins in vitro.</title>
        <authorList>
            <person name="Nagase T."/>
            <person name="Ishikawa K."/>
            <person name="Suyama M."/>
            <person name="Kikuno R."/>
            <person name="Hirosawa M."/>
            <person name="Miyajima N."/>
            <person name="Tanaka A."/>
            <person name="Kotani H."/>
            <person name="Nomura N."/>
            <person name="Ohara O."/>
        </authorList>
    </citation>
    <scope>NUCLEOTIDE SEQUENCE [LARGE SCALE MRNA]</scope>
    <source>
        <tissue>Brain</tissue>
    </source>
</reference>
<reference key="2">
    <citation type="submission" date="2005-07" db="EMBL/GenBank/DDBJ databases">
        <authorList>
            <person name="Mural R.J."/>
            <person name="Istrail S."/>
            <person name="Sutton G.G."/>
            <person name="Florea L."/>
            <person name="Halpern A.L."/>
            <person name="Mobarry C.M."/>
            <person name="Lippert R."/>
            <person name="Walenz B."/>
            <person name="Shatkay H."/>
            <person name="Dew I."/>
            <person name="Miller J.R."/>
            <person name="Flanigan M.J."/>
            <person name="Edwards N.J."/>
            <person name="Bolanos R."/>
            <person name="Fasulo D."/>
            <person name="Halldorsson B.V."/>
            <person name="Hannenhalli S."/>
            <person name="Turner R."/>
            <person name="Yooseph S."/>
            <person name="Lu F."/>
            <person name="Nusskern D.R."/>
            <person name="Shue B.C."/>
            <person name="Zheng X.H."/>
            <person name="Zhong F."/>
            <person name="Delcher A.L."/>
            <person name="Huson D.H."/>
            <person name="Kravitz S.A."/>
            <person name="Mouchard L."/>
            <person name="Reinert K."/>
            <person name="Remington K.A."/>
            <person name="Clark A.G."/>
            <person name="Waterman M.S."/>
            <person name="Eichler E.E."/>
            <person name="Adams M.D."/>
            <person name="Hunkapiller M.W."/>
            <person name="Myers E.W."/>
            <person name="Venter J.C."/>
        </authorList>
    </citation>
    <scope>NUCLEOTIDE SEQUENCE [LARGE SCALE GENOMIC DNA]</scope>
</reference>
<reference key="3">
    <citation type="journal article" date="2004" name="Genome Res.">
        <title>The status, quality, and expansion of the NIH full-length cDNA project: the Mammalian Gene Collection (MGC).</title>
        <authorList>
            <consortium name="The MGC Project Team"/>
        </authorList>
    </citation>
    <scope>NUCLEOTIDE SEQUENCE [LARGE SCALE MRNA]</scope>
    <source>
        <tissue>Testis</tissue>
    </source>
</reference>
<reference key="4">
    <citation type="submission" date="1998-02" db="EMBL/GenBank/DDBJ databases">
        <title>Cloning and sequencing of an Homo sapiens cDNA homologous to the yeast PCF11 gene.</title>
        <authorList>
            <person name="Rouillard J.-M."/>
            <person name="Lacroute F."/>
        </authorList>
    </citation>
    <scope>NUCLEOTIDE SEQUENCE [MRNA] OF 1-784</scope>
</reference>
<reference key="5">
    <citation type="journal article" date="2000" name="EMBO J.">
        <title>Human pre-mRNA cleavage factor II(m) contains homologs of yeast proteins and bridges two other cleavage factors.</title>
        <authorList>
            <person name="de Vries H."/>
            <person name="Rueegsegger U."/>
            <person name="Huebner W."/>
            <person name="Friedlein A."/>
            <person name="Langen H."/>
            <person name="Keller W."/>
        </authorList>
    </citation>
    <scope>FUNCTION</scope>
</reference>
<reference key="6">
    <citation type="journal article" date="2006" name="Nat. Biotechnol.">
        <title>A probability-based approach for high-throughput protein phosphorylation analysis and site localization.</title>
        <authorList>
            <person name="Beausoleil S.A."/>
            <person name="Villen J."/>
            <person name="Gerber S.A."/>
            <person name="Rush J."/>
            <person name="Gygi S.P."/>
        </authorList>
    </citation>
    <scope>IDENTIFICATION BY MASS SPECTROMETRY [LARGE SCALE ANALYSIS]</scope>
    <source>
        <tissue>Cervix carcinoma</tissue>
    </source>
</reference>
<reference key="7">
    <citation type="journal article" date="2008" name="J. Proteome Res.">
        <title>Combining protein-based IMAC, peptide-based IMAC, and MudPIT for efficient phosphoproteomic analysis.</title>
        <authorList>
            <person name="Cantin G.T."/>
            <person name="Yi W."/>
            <person name="Lu B."/>
            <person name="Park S.K."/>
            <person name="Xu T."/>
            <person name="Lee J.-D."/>
            <person name="Yates J.R. III"/>
        </authorList>
    </citation>
    <scope>PHOSPHORYLATION [LARGE SCALE ANALYSIS] AT THR-785</scope>
    <scope>IDENTIFICATION BY MASS SPECTROMETRY [LARGE SCALE ANALYSIS]</scope>
    <source>
        <tissue>Cervix carcinoma</tissue>
    </source>
</reference>
<reference key="8">
    <citation type="journal article" date="2008" name="Proc. Natl. Acad. Sci. U.S.A.">
        <title>A quantitative atlas of mitotic phosphorylation.</title>
        <authorList>
            <person name="Dephoure N."/>
            <person name="Zhou C."/>
            <person name="Villen J."/>
            <person name="Beausoleil S.A."/>
            <person name="Bakalarski C.E."/>
            <person name="Elledge S.J."/>
            <person name="Gygi S.P."/>
        </authorList>
    </citation>
    <scope>PHOSPHORYLATION [LARGE SCALE ANALYSIS] AT SER-169 AND SER-728</scope>
    <scope>IDENTIFICATION BY MASS SPECTROMETRY [LARGE SCALE ANALYSIS]</scope>
    <source>
        <tissue>Cervix carcinoma</tissue>
    </source>
</reference>
<reference key="9">
    <citation type="journal article" date="2009" name="Anal. Chem.">
        <title>Lys-N and trypsin cover complementary parts of the phosphoproteome in a refined SCX-based approach.</title>
        <authorList>
            <person name="Gauci S."/>
            <person name="Helbig A.O."/>
            <person name="Slijper M."/>
            <person name="Krijgsveld J."/>
            <person name="Heck A.J."/>
            <person name="Mohammed S."/>
        </authorList>
    </citation>
    <scope>ACETYLATION [LARGE SCALE ANALYSIS] AT SER-2</scope>
    <scope>CLEAVAGE OF INITIATOR METHIONINE [LARGE SCALE ANALYSIS]</scope>
    <scope>IDENTIFICATION BY MASS SPECTROMETRY [LARGE SCALE ANALYSIS]</scope>
</reference>
<reference key="10">
    <citation type="journal article" date="2009" name="Sci. Signal.">
        <title>Quantitative phosphoproteomic analysis of T cell receptor signaling reveals system-wide modulation of protein-protein interactions.</title>
        <authorList>
            <person name="Mayya V."/>
            <person name="Lundgren D.H."/>
            <person name="Hwang S.-I."/>
            <person name="Rezaul K."/>
            <person name="Wu L."/>
            <person name="Eng J.K."/>
            <person name="Rodionov V."/>
            <person name="Han D.K."/>
        </authorList>
    </citation>
    <scope>PHOSPHORYLATION [LARGE SCALE ANALYSIS] AT SER-182</scope>
    <scope>IDENTIFICATION BY MASS SPECTROMETRY [LARGE SCALE ANALYSIS]</scope>
    <source>
        <tissue>Leukemic T-cell</tissue>
    </source>
</reference>
<reference key="11">
    <citation type="journal article" date="2010" name="Sci. Signal.">
        <title>Quantitative phosphoproteomics reveals widespread full phosphorylation site occupancy during mitosis.</title>
        <authorList>
            <person name="Olsen J.V."/>
            <person name="Vermeulen M."/>
            <person name="Santamaria A."/>
            <person name="Kumar C."/>
            <person name="Miller M.L."/>
            <person name="Jensen L.J."/>
            <person name="Gnad F."/>
            <person name="Cox J."/>
            <person name="Jensen T.S."/>
            <person name="Nigg E.A."/>
            <person name="Brunak S."/>
            <person name="Mann M."/>
        </authorList>
    </citation>
    <scope>PHOSPHORYLATION [LARGE SCALE ANALYSIS] AT SER-794 AND SER-1161</scope>
    <scope>IDENTIFICATION BY MASS SPECTROMETRY [LARGE SCALE ANALYSIS]</scope>
    <source>
        <tissue>Cervix carcinoma</tissue>
    </source>
</reference>
<reference key="12">
    <citation type="journal article" date="2011" name="BMC Syst. Biol.">
        <title>Initial characterization of the human central proteome.</title>
        <authorList>
            <person name="Burkard T.R."/>
            <person name="Planyavsky M."/>
            <person name="Kaupe I."/>
            <person name="Breitwieser F.P."/>
            <person name="Buerckstuemmer T."/>
            <person name="Bennett K.L."/>
            <person name="Superti-Furga G."/>
            <person name="Colinge J."/>
        </authorList>
    </citation>
    <scope>IDENTIFICATION BY MASS SPECTROMETRY [LARGE SCALE ANALYSIS]</scope>
</reference>
<reference key="13">
    <citation type="journal article" date="2011" name="Sci. Signal.">
        <title>System-wide temporal characterization of the proteome and phosphoproteome of human embryonic stem cell differentiation.</title>
        <authorList>
            <person name="Rigbolt K.T."/>
            <person name="Prokhorova T.A."/>
            <person name="Akimov V."/>
            <person name="Henningsen J."/>
            <person name="Johansen P.T."/>
            <person name="Kratchmarova I."/>
            <person name="Kassem M."/>
            <person name="Mann M."/>
            <person name="Olsen J.V."/>
            <person name="Blagoev B."/>
        </authorList>
    </citation>
    <scope>PHOSPHORYLATION [LARGE SCALE ANALYSIS] AT SER-494; SER-509 AND SER-511</scope>
    <scope>IDENTIFICATION BY MASS SPECTROMETRY [LARGE SCALE ANALYSIS]</scope>
</reference>
<reference key="14">
    <citation type="journal article" date="2012" name="Proc. Natl. Acad. Sci. U.S.A.">
        <title>N-terminal acetylome analyses and functional insights of the N-terminal acetyltransferase NatB.</title>
        <authorList>
            <person name="Van Damme P."/>
            <person name="Lasa M."/>
            <person name="Polevoda B."/>
            <person name="Gazquez C."/>
            <person name="Elosegui-Artola A."/>
            <person name="Kim D.S."/>
            <person name="De Juan-Pardo E."/>
            <person name="Demeyer K."/>
            <person name="Hole K."/>
            <person name="Larrea E."/>
            <person name="Timmerman E."/>
            <person name="Prieto J."/>
            <person name="Arnesen T."/>
            <person name="Sherman F."/>
            <person name="Gevaert K."/>
            <person name="Aldabe R."/>
        </authorList>
    </citation>
    <scope>ACETYLATION [LARGE SCALE ANALYSIS] AT SER-2</scope>
    <scope>CLEAVAGE OF INITIATOR METHIONINE [LARGE SCALE ANALYSIS]</scope>
    <scope>IDENTIFICATION BY MASS SPECTROMETRY [LARGE SCALE ANALYSIS]</scope>
</reference>
<reference key="15">
    <citation type="journal article" date="2013" name="J. Proteome Res.">
        <title>Toward a comprehensive characterization of a human cancer cell phosphoproteome.</title>
        <authorList>
            <person name="Zhou H."/>
            <person name="Di Palma S."/>
            <person name="Preisinger C."/>
            <person name="Peng M."/>
            <person name="Polat A.N."/>
            <person name="Heck A.J."/>
            <person name="Mohammed S."/>
        </authorList>
    </citation>
    <scope>PHOSPHORYLATION [LARGE SCALE ANALYSIS] AT SER-169; THR-459; SER-489; SER-494; SER-705; SER-777; THR-785; SER-794; SER-851 AND THR-1530</scope>
    <scope>IDENTIFICATION BY MASS SPECTROMETRY [LARGE SCALE ANALYSIS]</scope>
    <source>
        <tissue>Cervix carcinoma</tissue>
        <tissue>Erythroleukemia</tissue>
    </source>
</reference>
<reference key="16">
    <citation type="journal article" date="2014" name="J. Proteomics">
        <title>An enzyme assisted RP-RPLC approach for in-depth analysis of human liver phosphoproteome.</title>
        <authorList>
            <person name="Bian Y."/>
            <person name="Song C."/>
            <person name="Cheng K."/>
            <person name="Dong M."/>
            <person name="Wang F."/>
            <person name="Huang J."/>
            <person name="Sun D."/>
            <person name="Wang L."/>
            <person name="Ye M."/>
            <person name="Zou H."/>
        </authorList>
    </citation>
    <scope>PHOSPHORYLATION [LARGE SCALE ANALYSIS] AT SER-645</scope>
    <scope>IDENTIFICATION BY MASS SPECTROMETRY [LARGE SCALE ANALYSIS]</scope>
    <source>
        <tissue>Liver</tissue>
    </source>
</reference>
<reference key="17">
    <citation type="journal article" date="2014" name="Mol. Cell. Proteomics">
        <title>Immunoaffinity enrichment and mass spectrometry analysis of protein methylation.</title>
        <authorList>
            <person name="Guo A."/>
            <person name="Gu H."/>
            <person name="Zhou J."/>
            <person name="Mulhern D."/>
            <person name="Wang Y."/>
            <person name="Lee K.A."/>
            <person name="Yang V."/>
            <person name="Aguiar M."/>
            <person name="Kornhauser J."/>
            <person name="Jia X."/>
            <person name="Ren J."/>
            <person name="Beausoleil S.A."/>
            <person name="Silva J.C."/>
            <person name="Vemulapalli V."/>
            <person name="Bedford M.T."/>
            <person name="Comb M.J."/>
        </authorList>
    </citation>
    <scope>METHYLATION [LARGE SCALE ANALYSIS] AT ARG-805; ARG-820; ARG-833; ARG-929; ARG-942; ARG-955; ARG-981; ARG-994; ARG-1007; ARG-1093 AND ARG-1104</scope>
    <scope>IDENTIFICATION BY MASS SPECTROMETRY [LARGE SCALE ANALYSIS]</scope>
    <source>
        <tissue>Colon carcinoma</tissue>
    </source>
</reference>
<reference key="18">
    <citation type="journal article" date="2015" name="Mol. Cell. Proteomics">
        <title>System-wide analysis of SUMOylation dynamics in response to replication stress reveals novel small ubiquitin-like modified target proteins and acceptor lysines relevant for genome stability.</title>
        <authorList>
            <person name="Xiao Z."/>
            <person name="Chang J.G."/>
            <person name="Hendriks I.A."/>
            <person name="Sigurdsson J.O."/>
            <person name="Olsen J.V."/>
            <person name="Vertegaal A.C."/>
        </authorList>
    </citation>
    <scope>SUMOYLATION [LARGE SCALE ANALYSIS] AT LYS-1511</scope>
    <scope>IDENTIFICATION BY MASS SPECTROMETRY [LARGE SCALE ANALYSIS]</scope>
</reference>
<reference key="19">
    <citation type="journal article" date="2017" name="Genes Dev.">
        <title>WNK1 kinase and the termination factor PCF11 connect nuclear mRNA export with transcription.</title>
        <authorList>
            <person name="Volanakis A."/>
            <person name="Kamieniarz-Gdula K."/>
            <person name="Schlackow M."/>
            <person name="Proudfoot N.J."/>
        </authorList>
    </citation>
    <scope>FUNCTION</scope>
    <scope>SUBCELLULAR LOCATION</scope>
    <scope>INTERACTION WITH RNA POLYMERASE II</scope>
    <scope>PHOSPHORYLATION AT SER-120 AND THR-121</scope>
    <scope>MUTAGENESIS OF 120-SER-THR-121</scope>
</reference>
<reference key="20">
    <citation type="journal article" date="2017" name="Nat. Struct. Mol. Biol.">
        <title>Site-specific mapping of the human SUMO proteome reveals co-modification with phosphorylation.</title>
        <authorList>
            <person name="Hendriks I.A."/>
            <person name="Lyon D."/>
            <person name="Young C."/>
            <person name="Jensen L.J."/>
            <person name="Vertegaal A.C."/>
            <person name="Nielsen M.L."/>
        </authorList>
    </citation>
    <scope>SUMOYLATION [LARGE SCALE ANALYSIS] AT LYS-291; LYS-328; LYS-456; LYS-654; LYS-723; LYS-1278; LYS-1419; LYS-1511; LYS-1524 AND LYS-1546</scope>
    <scope>IDENTIFICATION BY MASS SPECTROMETRY [LARGE SCALE ANALYSIS]</scope>
</reference>
<gene>
    <name evidence="7 10" type="primary">PCF11</name>
    <name evidence="6" type="synonym">KIAA0824</name>
</gene>
<proteinExistence type="evidence at protein level"/>
<dbReference type="EMBL" id="AB020631">
    <property type="protein sequence ID" value="BAA74847.1"/>
    <property type="status" value="ALT_INIT"/>
    <property type="molecule type" value="mRNA"/>
</dbReference>
<dbReference type="EMBL" id="CH471076">
    <property type="protein sequence ID" value="EAW75083.1"/>
    <property type="molecule type" value="Genomic_DNA"/>
</dbReference>
<dbReference type="EMBL" id="BC065384">
    <property type="protein sequence ID" value="AAH65384.2"/>
    <property type="molecule type" value="mRNA"/>
</dbReference>
<dbReference type="EMBL" id="BC146778">
    <property type="protein sequence ID" value="AAI46779.1"/>
    <property type="molecule type" value="mRNA"/>
</dbReference>
<dbReference type="EMBL" id="AF046935">
    <property type="protein sequence ID" value="AAC03107.1"/>
    <property type="status" value="ALT_SEQ"/>
    <property type="molecule type" value="mRNA"/>
</dbReference>
<dbReference type="CCDS" id="CCDS44689.1"/>
<dbReference type="RefSeq" id="NP_056969.2">
    <property type="nucleotide sequence ID" value="NM_015885.3"/>
</dbReference>
<dbReference type="PDB" id="6WJH">
    <property type="method" value="X-ray"/>
    <property type="resolution" value="2.19 A"/>
    <property type="chains" value="A/B/C/D=677-701"/>
</dbReference>
<dbReference type="PDBsum" id="6WJH"/>
<dbReference type="SMR" id="O94913"/>
<dbReference type="BioGRID" id="119622">
    <property type="interactions" value="117"/>
</dbReference>
<dbReference type="ComplexPortal" id="CPX-2692">
    <property type="entry name" value="pre-mRNA cleavage factor IIm complex"/>
</dbReference>
<dbReference type="CORUM" id="O94913"/>
<dbReference type="DIP" id="DIP-56825N"/>
<dbReference type="FunCoup" id="O94913">
    <property type="interactions" value="4495"/>
</dbReference>
<dbReference type="IntAct" id="O94913">
    <property type="interactions" value="69"/>
</dbReference>
<dbReference type="MINT" id="O94913"/>
<dbReference type="STRING" id="9606.ENSP00000298281"/>
<dbReference type="GlyCosmos" id="O94913">
    <property type="glycosylation" value="2 sites, 1 glycan"/>
</dbReference>
<dbReference type="GlyGen" id="O94913">
    <property type="glycosylation" value="9 sites, 1 O-linked glycan (8 sites)"/>
</dbReference>
<dbReference type="iPTMnet" id="O94913"/>
<dbReference type="MetOSite" id="O94913"/>
<dbReference type="PhosphoSitePlus" id="O94913"/>
<dbReference type="SwissPalm" id="O94913"/>
<dbReference type="BioMuta" id="PCF11"/>
<dbReference type="jPOST" id="O94913"/>
<dbReference type="MassIVE" id="O94913"/>
<dbReference type="PaxDb" id="9606-ENSP00000298281"/>
<dbReference type="PeptideAtlas" id="O94913"/>
<dbReference type="ProteomicsDB" id="50548"/>
<dbReference type="Pumba" id="O94913"/>
<dbReference type="Antibodypedia" id="48189">
    <property type="antibodies" value="78 antibodies from 22 providers"/>
</dbReference>
<dbReference type="DNASU" id="51585"/>
<dbReference type="Ensembl" id="ENST00000298281.8">
    <property type="protein sequence ID" value="ENSP00000298281.4"/>
    <property type="gene ID" value="ENSG00000165494.12"/>
</dbReference>
<dbReference type="GeneID" id="51585"/>
<dbReference type="KEGG" id="hsa:51585"/>
<dbReference type="UCSC" id="uc001ozx.5">
    <property type="organism name" value="human"/>
</dbReference>
<dbReference type="AGR" id="HGNC:30097"/>
<dbReference type="CTD" id="51585"/>
<dbReference type="DisGeNET" id="51585"/>
<dbReference type="GeneCards" id="PCF11"/>
<dbReference type="HGNC" id="HGNC:30097">
    <property type="gene designation" value="PCF11"/>
</dbReference>
<dbReference type="HPA" id="ENSG00000165494">
    <property type="expression patterns" value="Low tissue specificity"/>
</dbReference>
<dbReference type="MIM" id="608876">
    <property type="type" value="gene"/>
</dbReference>
<dbReference type="neXtProt" id="NX_O94913"/>
<dbReference type="OpenTargets" id="ENSG00000165494"/>
<dbReference type="PharmGKB" id="PA142671196"/>
<dbReference type="VEuPathDB" id="HostDB:ENSG00000165494"/>
<dbReference type="eggNOG" id="KOG2071">
    <property type="taxonomic scope" value="Eukaryota"/>
</dbReference>
<dbReference type="GeneTree" id="ENSGT00440000034259"/>
<dbReference type="HOGENOM" id="CLU_000976_0_0_1"/>
<dbReference type="InParanoid" id="O94913"/>
<dbReference type="OMA" id="QSVGGMR"/>
<dbReference type="OrthoDB" id="343582at2759"/>
<dbReference type="PAN-GO" id="O94913">
    <property type="GO annotations" value="6 GO annotations based on evolutionary models"/>
</dbReference>
<dbReference type="PhylomeDB" id="O94913"/>
<dbReference type="TreeFam" id="TF350069"/>
<dbReference type="PathwayCommons" id="O94913"/>
<dbReference type="Reactome" id="R-HSA-6807505">
    <property type="pathway name" value="RNA polymerase II transcribes snRNA genes"/>
</dbReference>
<dbReference type="Reactome" id="R-HSA-72187">
    <property type="pathway name" value="mRNA 3'-end processing"/>
</dbReference>
<dbReference type="Reactome" id="R-HSA-72203">
    <property type="pathway name" value="Processing of Capped Intron-Containing Pre-mRNA"/>
</dbReference>
<dbReference type="Reactome" id="R-HSA-73856">
    <property type="pathway name" value="RNA Polymerase II Transcription Termination"/>
</dbReference>
<dbReference type="Reactome" id="R-HSA-77595">
    <property type="pathway name" value="Processing of Intronless Pre-mRNAs"/>
</dbReference>
<dbReference type="SignaLink" id="O94913"/>
<dbReference type="SIGNOR" id="O94913"/>
<dbReference type="BioGRID-ORCS" id="51585">
    <property type="hits" value="705 hits in 1179 CRISPR screens"/>
</dbReference>
<dbReference type="ChiTaRS" id="PCF11">
    <property type="organism name" value="human"/>
</dbReference>
<dbReference type="GenomeRNAi" id="51585"/>
<dbReference type="Pharos" id="O94913">
    <property type="development level" value="Tbio"/>
</dbReference>
<dbReference type="PRO" id="PR:O94913"/>
<dbReference type="Proteomes" id="UP000005640">
    <property type="component" value="Chromosome 11"/>
</dbReference>
<dbReference type="RNAct" id="O94913">
    <property type="molecule type" value="protein"/>
</dbReference>
<dbReference type="Bgee" id="ENSG00000165494">
    <property type="expression patterns" value="Expressed in calcaneal tendon and 181 other cell types or tissues"/>
</dbReference>
<dbReference type="ExpressionAtlas" id="O94913">
    <property type="expression patterns" value="baseline and differential"/>
</dbReference>
<dbReference type="GO" id="GO:0005737">
    <property type="term" value="C:cytoplasm"/>
    <property type="evidence" value="ECO:0000318"/>
    <property type="project" value="GO_Central"/>
</dbReference>
<dbReference type="GO" id="GO:0005739">
    <property type="term" value="C:mitochondrion"/>
    <property type="evidence" value="ECO:0000314"/>
    <property type="project" value="HPA"/>
</dbReference>
<dbReference type="GO" id="GO:0005849">
    <property type="term" value="C:mRNA cleavage factor complex"/>
    <property type="evidence" value="ECO:0000318"/>
    <property type="project" value="GO_Central"/>
</dbReference>
<dbReference type="GO" id="GO:0005654">
    <property type="term" value="C:nucleoplasm"/>
    <property type="evidence" value="ECO:0000314"/>
    <property type="project" value="HPA"/>
</dbReference>
<dbReference type="GO" id="GO:0005634">
    <property type="term" value="C:nucleus"/>
    <property type="evidence" value="ECO:0000314"/>
    <property type="project" value="UniProtKB"/>
</dbReference>
<dbReference type="GO" id="GO:0003729">
    <property type="term" value="F:mRNA binding"/>
    <property type="evidence" value="ECO:0000318"/>
    <property type="project" value="GO_Central"/>
</dbReference>
<dbReference type="GO" id="GO:0000993">
    <property type="term" value="F:RNA polymerase II complex binding"/>
    <property type="evidence" value="ECO:0000314"/>
    <property type="project" value="UniProtKB"/>
</dbReference>
<dbReference type="GO" id="GO:0180010">
    <property type="term" value="P:co-transcriptional mRNA 3'-end processing, cleavage and polyadenylation pathway"/>
    <property type="evidence" value="ECO:0000303"/>
    <property type="project" value="UniProtKB"/>
</dbReference>
<dbReference type="GO" id="GO:0006369">
    <property type="term" value="P:termination of RNA polymerase II transcription"/>
    <property type="evidence" value="ECO:0000314"/>
    <property type="project" value="UniProtKB"/>
</dbReference>
<dbReference type="CDD" id="cd16982">
    <property type="entry name" value="CID_Pcf11"/>
    <property type="match status" value="1"/>
</dbReference>
<dbReference type="FunFam" id="1.25.40.90:FF:000015">
    <property type="entry name" value="Pre-mRNA cleavage complex 2 protein Pcf11"/>
    <property type="match status" value="1"/>
</dbReference>
<dbReference type="Gene3D" id="1.25.40.90">
    <property type="match status" value="1"/>
</dbReference>
<dbReference type="InterPro" id="IPR006569">
    <property type="entry name" value="CID_dom"/>
</dbReference>
<dbReference type="InterPro" id="IPR008942">
    <property type="entry name" value="ENTH_VHS"/>
</dbReference>
<dbReference type="InterPro" id="IPR045154">
    <property type="entry name" value="PCF11-like"/>
</dbReference>
<dbReference type="InterPro" id="IPR054127">
    <property type="entry name" value="Pcf11_C"/>
</dbReference>
<dbReference type="InterPro" id="IPR048832">
    <property type="entry name" value="PCF11_charged"/>
</dbReference>
<dbReference type="InterPro" id="IPR047415">
    <property type="entry name" value="Pcf11_CID"/>
</dbReference>
<dbReference type="InterPro" id="IPR021605">
    <property type="entry name" value="Pcf11_Clp1-ID"/>
</dbReference>
<dbReference type="InterPro" id="IPR048830">
    <property type="entry name" value="PCF11_helical"/>
</dbReference>
<dbReference type="InterPro" id="IPR048829">
    <property type="entry name" value="PCF11_RFEG_rpt"/>
</dbReference>
<dbReference type="PANTHER" id="PTHR15921:SF3">
    <property type="entry name" value="PRE-MRNA CLEAVAGE COMPLEX 2 PROTEIN PCF11"/>
    <property type="match status" value="1"/>
</dbReference>
<dbReference type="PANTHER" id="PTHR15921">
    <property type="entry name" value="PRE-MRNA CLEAVAGE COMPLEX II"/>
    <property type="match status" value="1"/>
</dbReference>
<dbReference type="Pfam" id="PF04818">
    <property type="entry name" value="CID"/>
    <property type="match status" value="1"/>
</dbReference>
<dbReference type="Pfam" id="PF21936">
    <property type="entry name" value="Pcf11_C"/>
    <property type="match status" value="1"/>
</dbReference>
<dbReference type="Pfam" id="PF20827">
    <property type="entry name" value="PCF11_charged"/>
    <property type="match status" value="1"/>
</dbReference>
<dbReference type="Pfam" id="PF20845">
    <property type="entry name" value="Pcf11_helical"/>
    <property type="match status" value="1"/>
</dbReference>
<dbReference type="Pfam" id="PF20844">
    <property type="entry name" value="PCF11_RFEG_rpt"/>
    <property type="match status" value="3"/>
</dbReference>
<dbReference type="Pfam" id="PF11526">
    <property type="entry name" value="Pfc11_Clp1_ID"/>
    <property type="match status" value="1"/>
</dbReference>
<dbReference type="SMART" id="SM00582">
    <property type="entry name" value="RPR"/>
    <property type="match status" value="1"/>
</dbReference>
<dbReference type="SUPFAM" id="SSF48464">
    <property type="entry name" value="ENTH/VHS domain"/>
    <property type="match status" value="1"/>
</dbReference>
<dbReference type="PROSITE" id="PS51391">
    <property type="entry name" value="CID"/>
    <property type="match status" value="1"/>
</dbReference>
<accession>O94913</accession>
<accession>A6H8W7</accession>
<accession>O43671</accession>
<accession>Q6P0X8</accession>
<organism>
    <name type="scientific">Homo sapiens</name>
    <name type="common">Human</name>
    <dbReference type="NCBI Taxonomy" id="9606"/>
    <lineage>
        <taxon>Eukaryota</taxon>
        <taxon>Metazoa</taxon>
        <taxon>Chordata</taxon>
        <taxon>Craniata</taxon>
        <taxon>Vertebrata</taxon>
        <taxon>Euteleostomi</taxon>
        <taxon>Mammalia</taxon>
        <taxon>Eutheria</taxon>
        <taxon>Euarchontoglires</taxon>
        <taxon>Primates</taxon>
        <taxon>Haplorrhini</taxon>
        <taxon>Catarrhini</taxon>
        <taxon>Hominidae</taxon>
        <taxon>Homo</taxon>
    </lineage>
</organism>
<sequence length="1555" mass="173050">MSEQTPAEAGAAGAREDACRDYQSSLEDLTFNSKPHINMLTILAEENLPFAKEIVSLIEAQTAKAPSSEKLPVMYLMDSIVKNVGREYLTAFTKNLVATFICVFEKVDENTRKSLFKLRSTWDEIFPLKKLYALDVRVNSLDPAWPIKPLPPNVNTSSIHVNPKFLNKSPEEPSTPGTVVSSPSISTPPIVPDIQKNLTQEQLIRQQLLAKQKQLLELQQKKLELELEQAKAQLAVSLSVQQETSNLGPGSAPSKLHVSQIPPMAVKAPHQVPVQSEKSRPGPSLQIQDLKGTNRDPRLNRISQHSHGKDQSHRKEFLMNTLNQSDTKTSKTIPSEKLNSSKQEKSKSGEKITKKELDQLDSKSKSKSKSPSPLKNKLSHTKDLKNQESESMRLSDMNKRDPRLKKHLQDKTDGKDDDVKEKRKTAEKKDKDEHMKSSEHRLAGSRNKIINGIVQKQDTITEESEKQGTKPGRSSTRKRSRSRSPKSRSPIIHSPKRRDRRSPKRRQRSMSPTSTPKAGKIRQSGAKQSHMEEFTPPSREDRNAKRSTKQDIRDPRRMKKTEEERPQETTNQHSTKSGTEPKENVENWQSSKSAKRWKSGWEENKSLQQVDEHSKPPHLRHRESWSSTKGILSPRAPKQQQHRLSVDANLQIPKELTLASKRELLQKTSERLASGEITQDDFLVVVHQIRQLFQYQEGVREEQRSPFNDRFPLKRPRYEDSDKPFVDSPASRFAGLDTNQRLTALAEDRPLFDGPSRPSVARDGPTKMIFEGPNKLSPRIDGPPTPASLRFDGSPGQMGGGGPLRFEGPQGQLGGGCPLRFEGPPGPVGTPLRFEGPIGQAGGGGFRFEGSPGLRFEGSPGGLRFEGPGGQPVGGLRFEGHRGQPVGGLRFEGPHGQPVGGLRFDNPRGQPVGGLRFEGGHGPSGAAIRFDGPHGQPGGGIRFEGPLLQQGVGMRFEGPHGQSVAGLRFEGQHNQLGGNLRFEGPHGQPGVGIRFEGPLVQQGGGMRFEGPSVPGGGLRIEGPLGQGGPRFEGCHALRFDGQPGQPSLLPRFDGLHGQPGPRFERTPGQPGPQRFDGPPGQQVQPRFDGVPQRFDGPQHQQASRFDIPLGLQGTRFDNHPSQRLESVSFNQTGPYNDPPGNAFNAPSQGLQFQRHEQIFDSPQGPNFNGPHGPGNQSFSNPLNRASGHYFDEKNLQSSQFGNFGNIPAPMTVGNIQASQQVLSGVAQPVAFGQGQQFLPVHPQNPGFVQNPSGALPKAYPDNHLSQVDVNELFSKLLKTGILKLSQTDSATTQVSEVTAQPPPEEEEDQNEDQDVPDLTNFTVEELKQRYDSVINRLYTGIQCYSCGMRFTTSQTDVYADHLDWHYRQNRTEKDVSRKVTHRRWYYSLTDWIEFEEIADLEERAKSQFFEKVHEEVVLKTQEAAKEKEFQSVPAGPAGAVESCEICQEQFEQYWDEEEEEWHLKNAIRVDGKIYHPSCYEDYQNTSSFDCTPSPSKTPVENPLNIMLNIVKNELQEPCDSPKVKEERIDTPPACTEESIATPSEIKTENDTVESV</sequence>
<feature type="initiator methionine" description="Removed" evidence="13 17">
    <location>
        <position position="1"/>
    </location>
</feature>
<feature type="chain" id="PRO_0000058246" description="Pre-mRNA cleavage complex 2 protein Pcf11">
    <location>
        <begin position="2"/>
        <end position="1555"/>
    </location>
</feature>
<feature type="domain" description="CID" evidence="2">
    <location>
        <begin position="14"/>
        <end position="142"/>
    </location>
</feature>
<feature type="region of interest" description="Disordered" evidence="3">
    <location>
        <begin position="167"/>
        <end position="186"/>
    </location>
</feature>
<feature type="region of interest" description="Disordered" evidence="3">
    <location>
        <begin position="266"/>
        <end position="648"/>
    </location>
</feature>
<feature type="region of interest" description="Disordered" evidence="3">
    <location>
        <begin position="707"/>
        <end position="732"/>
    </location>
</feature>
<feature type="region of interest" description="Disordered" evidence="3">
    <location>
        <begin position="749"/>
        <end position="781"/>
    </location>
</feature>
<feature type="region of interest" description="Disordered" evidence="3">
    <location>
        <begin position="1056"/>
        <end position="1081"/>
    </location>
</feature>
<feature type="region of interest" description="Disordered" evidence="3">
    <location>
        <begin position="1127"/>
        <end position="1147"/>
    </location>
</feature>
<feature type="region of interest" description="Disordered" evidence="3">
    <location>
        <begin position="1159"/>
        <end position="1187"/>
    </location>
</feature>
<feature type="region of interest" description="Disordered" evidence="3">
    <location>
        <begin position="1289"/>
        <end position="1315"/>
    </location>
</feature>
<feature type="region of interest" description="Disordered" evidence="3">
    <location>
        <begin position="1516"/>
        <end position="1555"/>
    </location>
</feature>
<feature type="coiled-coil region" evidence="1">
    <location>
        <begin position="202"/>
        <end position="239"/>
    </location>
</feature>
<feature type="compositionally biased region" description="Low complexity" evidence="3">
    <location>
        <begin position="174"/>
        <end position="186"/>
    </location>
</feature>
<feature type="compositionally biased region" description="Basic and acidic residues" evidence="3">
    <location>
        <begin position="307"/>
        <end position="317"/>
    </location>
</feature>
<feature type="compositionally biased region" description="Polar residues" evidence="3">
    <location>
        <begin position="320"/>
        <end position="333"/>
    </location>
</feature>
<feature type="compositionally biased region" description="Basic and acidic residues" evidence="3">
    <location>
        <begin position="342"/>
        <end position="364"/>
    </location>
</feature>
<feature type="compositionally biased region" description="Basic and acidic residues" evidence="3">
    <location>
        <begin position="380"/>
        <end position="421"/>
    </location>
</feature>
<feature type="compositionally biased region" description="Basic and acidic residues" evidence="3">
    <location>
        <begin position="427"/>
        <end position="442"/>
    </location>
</feature>
<feature type="compositionally biased region" description="Basic residues" evidence="3">
    <location>
        <begin position="475"/>
        <end position="486"/>
    </location>
</feature>
<feature type="compositionally biased region" description="Basic residues" evidence="3">
    <location>
        <begin position="494"/>
        <end position="508"/>
    </location>
</feature>
<feature type="compositionally biased region" description="Basic and acidic residues" evidence="3">
    <location>
        <begin position="529"/>
        <end position="567"/>
    </location>
</feature>
<feature type="compositionally biased region" description="Polar residues" evidence="3">
    <location>
        <begin position="568"/>
        <end position="578"/>
    </location>
</feature>
<feature type="compositionally biased region" description="Basic and acidic residues" evidence="3">
    <location>
        <begin position="599"/>
        <end position="615"/>
    </location>
</feature>
<feature type="compositionally biased region" description="Basic and acidic residues" evidence="3">
    <location>
        <begin position="716"/>
        <end position="725"/>
    </location>
</feature>
<feature type="compositionally biased region" description="Low complexity" evidence="3">
    <location>
        <begin position="1162"/>
        <end position="1175"/>
    </location>
</feature>
<feature type="compositionally biased region" description="Polar residues" evidence="3">
    <location>
        <begin position="1289"/>
        <end position="1298"/>
    </location>
</feature>
<feature type="compositionally biased region" description="Acidic residues" evidence="3">
    <location>
        <begin position="1303"/>
        <end position="1315"/>
    </location>
</feature>
<feature type="compositionally biased region" description="Basic and acidic residues" evidence="3">
    <location>
        <begin position="1519"/>
        <end position="1529"/>
    </location>
</feature>
<feature type="modified residue" description="N-acetylserine" evidence="13 17">
    <location>
        <position position="2"/>
    </location>
</feature>
<feature type="modified residue" description="Phosphoserine; by WNK1" evidence="9">
    <location>
        <position position="120"/>
    </location>
</feature>
<feature type="modified residue" description="Phosphothreonine; by WNK1" evidence="9">
    <location>
        <position position="121"/>
    </location>
</feature>
<feature type="modified residue" description="Phosphoserine" evidence="12 18">
    <location>
        <position position="169"/>
    </location>
</feature>
<feature type="modified residue" description="Phosphoserine" evidence="14">
    <location>
        <position position="182"/>
    </location>
</feature>
<feature type="modified residue" description="Phosphothreonine" evidence="18">
    <location>
        <position position="459"/>
    </location>
</feature>
<feature type="modified residue" description="Phosphoserine" evidence="18">
    <location>
        <position position="489"/>
    </location>
</feature>
<feature type="modified residue" description="Phosphoserine" evidence="16 18">
    <location>
        <position position="494"/>
    </location>
</feature>
<feature type="modified residue" description="Phosphoserine" evidence="16">
    <location>
        <position position="509"/>
    </location>
</feature>
<feature type="modified residue" description="Phosphoserine" evidence="16">
    <location>
        <position position="511"/>
    </location>
</feature>
<feature type="modified residue" description="Phosphoserine" evidence="20">
    <location>
        <position position="645"/>
    </location>
</feature>
<feature type="modified residue" description="Phosphoserine" evidence="18">
    <location>
        <position position="705"/>
    </location>
</feature>
<feature type="modified residue" description="Phosphoserine" evidence="12">
    <location>
        <position position="728"/>
    </location>
</feature>
<feature type="modified residue" description="Phosphoserine" evidence="18">
    <location>
        <position position="777"/>
    </location>
</feature>
<feature type="modified residue" description="Phosphothreonine" evidence="11 18">
    <location>
        <position position="785"/>
    </location>
</feature>
<feature type="modified residue" description="Phosphoserine" evidence="15 18">
    <location>
        <position position="794"/>
    </location>
</feature>
<feature type="modified residue" description="Asymmetric dimethylarginine" evidence="19">
    <location>
        <position position="805"/>
    </location>
</feature>
<feature type="modified residue" description="Asymmetric dimethylarginine" evidence="19">
    <location>
        <position position="820"/>
    </location>
</feature>
<feature type="modified residue" description="Asymmetric dimethylarginine" evidence="19">
    <location>
        <position position="833"/>
    </location>
</feature>
<feature type="modified residue" description="Phosphoserine" evidence="18">
    <location>
        <position position="851"/>
    </location>
</feature>
<feature type="modified residue" description="Asymmetric dimethylarginine" evidence="19">
    <location>
        <position position="929"/>
    </location>
</feature>
<feature type="modified residue" description="Asymmetric dimethylarginine" evidence="19">
    <location>
        <position position="942"/>
    </location>
</feature>
<feature type="modified residue" description="Asymmetric dimethylarginine" evidence="19">
    <location>
        <position position="955"/>
    </location>
</feature>
<feature type="modified residue" description="Asymmetric dimethylarginine" evidence="19">
    <location>
        <position position="981"/>
    </location>
</feature>
<feature type="modified residue" description="Asymmetric dimethylarginine" evidence="19">
    <location>
        <position position="994"/>
    </location>
</feature>
<feature type="modified residue" description="Asymmetric dimethylarginine" evidence="19">
    <location>
        <position position="1007"/>
    </location>
</feature>
<feature type="modified residue" description="Asymmetric dimethylarginine" evidence="19">
    <location>
        <position position="1093"/>
    </location>
</feature>
<feature type="modified residue" description="Asymmetric dimethylarginine" evidence="19">
    <location>
        <position position="1104"/>
    </location>
</feature>
<feature type="modified residue" description="Phosphoserine" evidence="15">
    <location>
        <position position="1161"/>
    </location>
</feature>
<feature type="modified residue" description="Phosphothreonine" evidence="18">
    <location>
        <position position="1530"/>
    </location>
</feature>
<feature type="cross-link" description="Glycyl lysine isopeptide (Lys-Gly) (interchain with G-Cter in SUMO2)" evidence="22">
    <location>
        <position position="291"/>
    </location>
</feature>
<feature type="cross-link" description="Glycyl lysine isopeptide (Lys-Gly) (interchain with G-Cter in SUMO2)" evidence="22">
    <location>
        <position position="328"/>
    </location>
</feature>
<feature type="cross-link" description="Glycyl lysine isopeptide (Lys-Gly) (interchain with G-Cter in SUMO2)" evidence="22">
    <location>
        <position position="456"/>
    </location>
</feature>
<feature type="cross-link" description="Glycyl lysine isopeptide (Lys-Gly) (interchain with G-Cter in SUMO2)" evidence="22">
    <location>
        <position position="654"/>
    </location>
</feature>
<feature type="cross-link" description="Glycyl lysine isopeptide (Lys-Gly) (interchain with G-Cter in SUMO2)" evidence="22">
    <location>
        <position position="723"/>
    </location>
</feature>
<feature type="cross-link" description="Glycyl lysine isopeptide (Lys-Gly) (interchain with G-Cter in SUMO2)" evidence="22">
    <location>
        <position position="1278"/>
    </location>
</feature>
<feature type="cross-link" description="Glycyl lysine isopeptide (Lys-Gly) (interchain with G-Cter in SUMO2)" evidence="22">
    <location>
        <position position="1419"/>
    </location>
</feature>
<feature type="cross-link" description="Glycyl lysine isopeptide (Lys-Gly) (interchain with G-Cter in SUMO2)" evidence="21 22">
    <location>
        <position position="1511"/>
    </location>
</feature>
<feature type="cross-link" description="Glycyl lysine isopeptide (Lys-Gly) (interchain with G-Cter in SUMO2)" evidence="22">
    <location>
        <position position="1524"/>
    </location>
</feature>
<feature type="cross-link" description="Glycyl lysine isopeptide (Lys-Gly) (interchain with G-Cter in SUMO2)" evidence="22">
    <location>
        <position position="1546"/>
    </location>
</feature>
<feature type="sequence variant" id="VAR_036878" description="In dbSNP:rs7935175.">
    <original>Q</original>
    <variation>H</variation>
    <location>
        <position position="651"/>
    </location>
</feature>
<feature type="sequence variant" id="VAR_036879" description="In dbSNP:rs17513642.">
    <original>H</original>
    <variation>Y</variation>
    <location>
        <position position="1119"/>
    </location>
</feature>
<feature type="sequence variant" id="VAR_036880" description="In dbSNP:rs11233510.">
    <original>E</original>
    <variation>K</variation>
    <location>
        <position position="1402"/>
    </location>
</feature>
<feature type="mutagenesis site" description="Abolished phosphorylation by WNK1, leading to mRNA retention in the nucleus and in prolonged association with polyadenylated mRNAs at transcription loci." evidence="5">
    <original>ST</original>
    <variation>AA</variation>
    <location>
        <begin position="120"/>
        <end position="121"/>
    </location>
</feature>
<feature type="sequence conflict" description="In Ref. 4; AAC03107." evidence="8" ref="4">
    <original>P</original>
    <variation>L</variation>
    <location>
        <position position="783"/>
    </location>
</feature>
<feature type="sequence conflict" description="In Ref. 4; AAC03107." evidence="8" ref="4">
    <original>P</original>
    <variation>R</variation>
    <location>
        <position position="784"/>
    </location>
</feature>
<feature type="helix" evidence="23">
    <location>
        <begin position="682"/>
        <end position="693"/>
    </location>
</feature>
<feature type="turn" evidence="23">
    <location>
        <begin position="694"/>
        <end position="696"/>
    </location>
</feature>